<feature type="chain" id="PRO_0000195963" description="Histone H1.1">
    <location>
        <begin position="1"/>
        <end position="250"/>
    </location>
</feature>
<feature type="domain" description="H15" evidence="1">
    <location>
        <begin position="44"/>
        <end position="118"/>
    </location>
</feature>
<feature type="region of interest" description="Disordered" evidence="2">
    <location>
        <begin position="1"/>
        <end position="52"/>
    </location>
</feature>
<feature type="region of interest" description="Disordered" evidence="2">
    <location>
        <begin position="104"/>
        <end position="250"/>
    </location>
</feature>
<feature type="compositionally biased region" description="Polar residues" evidence="2">
    <location>
        <begin position="1"/>
        <end position="11"/>
    </location>
</feature>
<feature type="compositionally biased region" description="Basic and acidic residues" evidence="2">
    <location>
        <begin position="122"/>
        <end position="133"/>
    </location>
</feature>
<feature type="compositionally biased region" description="Low complexity" evidence="2">
    <location>
        <begin position="140"/>
        <end position="161"/>
    </location>
</feature>
<feature type="compositionally biased region" description="Basic and acidic residues" evidence="2">
    <location>
        <begin position="174"/>
        <end position="191"/>
    </location>
</feature>
<feature type="compositionally biased region" description="Low complexity" evidence="2">
    <location>
        <begin position="192"/>
        <end position="234"/>
    </location>
</feature>
<feature type="compositionally biased region" description="Basic residues" evidence="2">
    <location>
        <begin position="235"/>
        <end position="250"/>
    </location>
</feature>
<evidence type="ECO:0000255" key="1">
    <source>
        <dbReference type="PROSITE-ProRule" id="PRU00837"/>
    </source>
</evidence>
<evidence type="ECO:0000256" key="2">
    <source>
        <dbReference type="SAM" id="MobiDB-lite"/>
    </source>
</evidence>
<gene>
    <name type="primary">His1.1</name>
    <name type="synonym">122o6</name>
    <name type="synonym">His1</name>
</gene>
<sequence length="250" mass="25739">MSDSAVATSASPVIAQAASGEKKVSTKKGSSTPESKKSTAAPPSHPPTQQMVDASIKNLKERGGSSLLAIKKYIGATYKCDAQKLAPFIKKYLKNAVANGNVIQTKGKGASGSFKLSASANKDAKPKASAVEKKTKKVNASAARATKSKSSTSTTKKAAGAADKKLSKSAAAKKNVEKKKADKEKAKDAKKTGTIKAKPTTAKAKSSATKPKTPKPKTTSAKPKKVVSATTPKKTAVKKPKAKTASATKK</sequence>
<comment type="function">
    <text>Histones H1 are necessary for the condensation of nucleosome chains into higher-order structures.</text>
</comment>
<comment type="subcellular location">
    <subcellularLocation>
        <location>Nucleus</location>
    </subcellularLocation>
    <subcellularLocation>
        <location>Chromosome</location>
    </subcellularLocation>
</comment>
<comment type="similarity">
    <text evidence="1">Belongs to the histone H1/H5 family.</text>
</comment>
<name>H11_DROVI</name>
<dbReference type="EMBL" id="L76558">
    <property type="protein sequence ID" value="AAA90975.1"/>
    <property type="molecule type" value="Genomic_DNA"/>
</dbReference>
<dbReference type="SMR" id="Q24704"/>
<dbReference type="OrthoDB" id="8251629at2759"/>
<dbReference type="GO" id="GO:0000786">
    <property type="term" value="C:nucleosome"/>
    <property type="evidence" value="ECO:0007669"/>
    <property type="project" value="InterPro"/>
</dbReference>
<dbReference type="GO" id="GO:0005634">
    <property type="term" value="C:nucleus"/>
    <property type="evidence" value="ECO:0007669"/>
    <property type="project" value="UniProtKB-SubCell"/>
</dbReference>
<dbReference type="GO" id="GO:0003690">
    <property type="term" value="F:double-stranded DNA binding"/>
    <property type="evidence" value="ECO:0007669"/>
    <property type="project" value="TreeGrafter"/>
</dbReference>
<dbReference type="GO" id="GO:0031492">
    <property type="term" value="F:nucleosomal DNA binding"/>
    <property type="evidence" value="ECO:0007669"/>
    <property type="project" value="TreeGrafter"/>
</dbReference>
<dbReference type="GO" id="GO:0030527">
    <property type="term" value="F:structural constituent of chromatin"/>
    <property type="evidence" value="ECO:0007669"/>
    <property type="project" value="InterPro"/>
</dbReference>
<dbReference type="GO" id="GO:0030261">
    <property type="term" value="P:chromosome condensation"/>
    <property type="evidence" value="ECO:0007669"/>
    <property type="project" value="TreeGrafter"/>
</dbReference>
<dbReference type="GO" id="GO:0045910">
    <property type="term" value="P:negative regulation of DNA recombination"/>
    <property type="evidence" value="ECO:0007669"/>
    <property type="project" value="TreeGrafter"/>
</dbReference>
<dbReference type="GO" id="GO:0006334">
    <property type="term" value="P:nucleosome assembly"/>
    <property type="evidence" value="ECO:0007669"/>
    <property type="project" value="InterPro"/>
</dbReference>
<dbReference type="CDD" id="cd00073">
    <property type="entry name" value="H15"/>
    <property type="match status" value="1"/>
</dbReference>
<dbReference type="FunFam" id="1.10.10.10:FF:000140">
    <property type="entry name" value="Histone H1.0"/>
    <property type="match status" value="1"/>
</dbReference>
<dbReference type="Gene3D" id="1.10.10.10">
    <property type="entry name" value="Winged helix-like DNA-binding domain superfamily/Winged helix DNA-binding domain"/>
    <property type="match status" value="1"/>
</dbReference>
<dbReference type="InterPro" id="IPR005819">
    <property type="entry name" value="H1/H5"/>
</dbReference>
<dbReference type="InterPro" id="IPR005818">
    <property type="entry name" value="Histone_H1/H5_H15"/>
</dbReference>
<dbReference type="InterPro" id="IPR036388">
    <property type="entry name" value="WH-like_DNA-bd_sf"/>
</dbReference>
<dbReference type="InterPro" id="IPR036390">
    <property type="entry name" value="WH_DNA-bd_sf"/>
</dbReference>
<dbReference type="PANTHER" id="PTHR11467:SF20">
    <property type="entry name" value="H15 DOMAIN-CONTAINING PROTEIN-RELATED"/>
    <property type="match status" value="1"/>
</dbReference>
<dbReference type="PANTHER" id="PTHR11467">
    <property type="entry name" value="HISTONE H1"/>
    <property type="match status" value="1"/>
</dbReference>
<dbReference type="Pfam" id="PF00538">
    <property type="entry name" value="Linker_histone"/>
    <property type="match status" value="1"/>
</dbReference>
<dbReference type="PRINTS" id="PR00624">
    <property type="entry name" value="HISTONEH5"/>
</dbReference>
<dbReference type="SMART" id="SM00526">
    <property type="entry name" value="H15"/>
    <property type="match status" value="1"/>
</dbReference>
<dbReference type="SUPFAM" id="SSF46785">
    <property type="entry name" value="Winged helix' DNA-binding domain"/>
    <property type="match status" value="1"/>
</dbReference>
<dbReference type="PROSITE" id="PS51504">
    <property type="entry name" value="H15"/>
    <property type="match status" value="1"/>
</dbReference>
<proteinExistence type="inferred from homology"/>
<organism>
    <name type="scientific">Drosophila virilis</name>
    <name type="common">Fruit fly</name>
    <dbReference type="NCBI Taxonomy" id="7244"/>
    <lineage>
        <taxon>Eukaryota</taxon>
        <taxon>Metazoa</taxon>
        <taxon>Ecdysozoa</taxon>
        <taxon>Arthropoda</taxon>
        <taxon>Hexapoda</taxon>
        <taxon>Insecta</taxon>
        <taxon>Pterygota</taxon>
        <taxon>Neoptera</taxon>
        <taxon>Endopterygota</taxon>
        <taxon>Diptera</taxon>
        <taxon>Brachycera</taxon>
        <taxon>Muscomorpha</taxon>
        <taxon>Ephydroidea</taxon>
        <taxon>Drosophilidae</taxon>
        <taxon>Drosophila</taxon>
    </lineage>
</organism>
<reference key="1">
    <citation type="journal article" date="2000" name="J. Mol. Evol.">
        <title>Histone H1 genes and histone gene clusters in the genus Drosophila.</title>
        <authorList>
            <person name="Nagel S."/>
            <person name="Grossbach U."/>
        </authorList>
    </citation>
    <scope>NUCLEOTIDE SEQUENCE [GENOMIC DNA]</scope>
    <source>
        <strain>Bochum</strain>
    </source>
</reference>
<reference key="2">
    <citation type="journal article" date="1998" name="Chromosoma">
        <title>Drosophila virilis has atypical kinds and arrangements of histone repeats.</title>
        <authorList>
            <person name="Schienman J.E."/>
            <person name="Lozovskaya E.R."/>
            <person name="Strausbaugh L.D."/>
        </authorList>
    </citation>
    <scope>DISCUSSION OF SEQUENCE</scope>
</reference>
<keyword id="KW-0158">Chromosome</keyword>
<keyword id="KW-0238">DNA-binding</keyword>
<keyword id="KW-0539">Nucleus</keyword>
<accession>Q24704</accession>
<protein>
    <recommendedName>
        <fullName>Histone H1.1</fullName>
    </recommendedName>
</protein>